<evidence type="ECO:0000250" key="1"/>
<evidence type="ECO:0000305" key="2"/>
<dbReference type="EC" id="2.7.7.50"/>
<dbReference type="EC" id="2.1.1.56"/>
<dbReference type="EMBL" id="DQ113900">
    <property type="protein sequence ID" value="AAZ03488.1"/>
    <property type="molecule type" value="Genomic_RNA"/>
</dbReference>
<dbReference type="RefSeq" id="YP_392493.1">
    <property type="nucleotide sequence ID" value="NC_007551.1"/>
</dbReference>
<dbReference type="GeneID" id="5076653"/>
<dbReference type="KEGG" id="vg:5076653"/>
<dbReference type="OrthoDB" id="10783at10239"/>
<dbReference type="Proteomes" id="UP000007663">
    <property type="component" value="Genome"/>
</dbReference>
<dbReference type="GO" id="GO:0019013">
    <property type="term" value="C:viral nucleocapsid"/>
    <property type="evidence" value="ECO:0007669"/>
    <property type="project" value="InterPro"/>
</dbReference>
<dbReference type="GO" id="GO:0005525">
    <property type="term" value="F:GTP binding"/>
    <property type="evidence" value="ECO:0007669"/>
    <property type="project" value="UniProtKB-KW"/>
</dbReference>
<dbReference type="GO" id="GO:0004482">
    <property type="term" value="F:mRNA 5'-cap (guanine-N7-)-methyltransferase activity"/>
    <property type="evidence" value="ECO:0007669"/>
    <property type="project" value="UniProtKB-EC"/>
</dbReference>
<dbReference type="GO" id="GO:0004484">
    <property type="term" value="F:mRNA guanylyltransferase activity"/>
    <property type="evidence" value="ECO:0007669"/>
    <property type="project" value="UniProtKB-EC"/>
</dbReference>
<dbReference type="GO" id="GO:0003723">
    <property type="term" value="F:RNA binding"/>
    <property type="evidence" value="ECO:0007669"/>
    <property type="project" value="UniProtKB-KW"/>
</dbReference>
<dbReference type="GO" id="GO:0016032">
    <property type="term" value="P:viral process"/>
    <property type="evidence" value="ECO:0007669"/>
    <property type="project" value="InterPro"/>
</dbReference>
<dbReference type="InterPro" id="IPR011181">
    <property type="entry name" value="VP3_Rotav"/>
</dbReference>
<dbReference type="Pfam" id="PF06929">
    <property type="entry name" value="Rotavirus_VP3"/>
    <property type="match status" value="1"/>
</dbReference>
<comment type="function">
    <text evidence="1">Multifunctional enzyme involved in mRNA capping. Catalyzes the formation of the 5' cap structure on the viral plus-strand transcripts. Specifically binds to GTP and displays guanylyltransferase and methyltransferase activities. Together with VP1 polymerase, forms an enzyme complex positioned near the channels situated at each of the five-fold vertices of the core. Following infection, the outermost layer of the virus is lost, leaving a double-layered particle (DLP) made up of the core and VP6 shell. VP1 then catalyzes the transcription of fully conservative plus-strand genomic RNAs that are capped by VP3 and extruded through the DLP's channels into the cytoplasm where they function as mRNAs for translation of viral proteins. DLPs probably have an RNA triphosphatase activity as well, whereas open cores don't (By similarity).</text>
</comment>
<comment type="catalytic activity">
    <reaction>
        <text>a 5'-end diphospho-ribonucleoside in mRNA + GTP + H(+) = a 5'-end (5'-triphosphoguanosine)-ribonucleoside in mRNA + diphosphate</text>
        <dbReference type="Rhea" id="RHEA:67012"/>
        <dbReference type="Rhea" id="RHEA-COMP:17165"/>
        <dbReference type="Rhea" id="RHEA-COMP:17166"/>
        <dbReference type="ChEBI" id="CHEBI:15378"/>
        <dbReference type="ChEBI" id="CHEBI:33019"/>
        <dbReference type="ChEBI" id="CHEBI:37565"/>
        <dbReference type="ChEBI" id="CHEBI:167616"/>
        <dbReference type="ChEBI" id="CHEBI:167617"/>
        <dbReference type="EC" id="2.7.7.50"/>
    </reaction>
</comment>
<comment type="catalytic activity">
    <reaction>
        <text>a 5'-end (5'-triphosphoguanosine)-ribonucleoside in mRNA + S-adenosyl-L-methionine = a 5'-end (N(7)-methyl 5'-triphosphoguanosine)-ribonucleoside in mRNA + S-adenosyl-L-homocysteine</text>
        <dbReference type="Rhea" id="RHEA:67008"/>
        <dbReference type="Rhea" id="RHEA-COMP:17166"/>
        <dbReference type="Rhea" id="RHEA-COMP:17167"/>
        <dbReference type="ChEBI" id="CHEBI:57856"/>
        <dbReference type="ChEBI" id="CHEBI:59789"/>
        <dbReference type="ChEBI" id="CHEBI:156461"/>
        <dbReference type="ChEBI" id="CHEBI:167617"/>
        <dbReference type="EC" id="2.1.1.56"/>
    </reaction>
</comment>
<comment type="subunit">
    <text evidence="2">Interacts with VP1. Interacts with VP2.</text>
</comment>
<comment type="subcellular location">
    <subcellularLocation>
        <location evidence="2">Virion</location>
    </subcellularLocation>
    <text evidence="2">Attached inside the inner capsid as a minor component. Also found in spherical cytoplasmic structures, called virus factories, that appear early after infection and are the site of viral replication and packaging (Potential).</text>
</comment>
<comment type="similarity">
    <text evidence="2">Belongs to the rotavirus VP3 family.</text>
</comment>
<proteinExistence type="inferred from homology"/>
<sequence length="719" mass="84711">MAKLIIINSEKGEKVETHEDIFKLSNLQQREIYAITNERTKSILLNQTFYTILDIENEPKDKVAFDSYNSLFPTSIFSYSRQDRLFGTCNHVLDNNIHYSFALFDSMVDNLSTYLPNDWNIIKISDSIDYPIGNDLLFYVFDNLVHMTIDQFVNSEEKQMNTVPKCKESQDKIKEVFTDIMSHLYMPAIDYDPQSYNYRVSRREIGNLVRDQVFSLVKGHIHLIGPEMESLRNIIMFLHAGNSITFHTIDTSTKSSYIKELEFNKKTKLTMASVLVNQRKNMNNFFKGLIRHYITYGIPRKVYYIGAYPSYWLELITWVPFNIVAYDPKYRRVDNDKIIWYDRLFDRNDIETIESKSYIYIDIRTDVRNLDTTKKQRIFKEEDDMIVDMAIKLASKQCTVMFKRKIFPGNNMSFGDPLFHPKLTQLGREYYNCITTIVSPSVYKESELYSLLLSARSNNVSNYVYGGSKFDQFSIVNCNSTVVALYSLSNTVNSLKTIEHAIKYNHIITFPHRTDRGDWRNIEELDNSSPFQNRKRQLEFEDWSIDPKNYVMKFRCEMVSESVFLQLGHSRALIPDLYNHMISLRMEMPLFYSDRFFSHIGIRQPSIFKRDSYMTSRLSAYISRQLTHSINLSVLKRNHFEGYSGHLIAIETSFSSLVFTMSPYRWLIRAKKLLTKNKMRDKFKIGDGQPHTREEFENTYDYLKINRLVNSTFRSLLLD</sequence>
<protein>
    <recommendedName>
        <fullName>Protein VP3</fullName>
    </recommendedName>
    <domain>
        <recommendedName>
            <fullName>mRNA guanylyltransferase</fullName>
            <ecNumber>2.7.7.50</ecNumber>
        </recommendedName>
    </domain>
    <domain>
        <recommendedName>
            <fullName>mRNA (guanine-N(7))-methyltransferase</fullName>
            <ecNumber>2.1.1.56</ecNumber>
        </recommendedName>
    </domain>
</protein>
<name>VP3_ROTJ1</name>
<accession>Q45UF7</accession>
<organism>
    <name type="scientific">Rotavirus X (strain RVX/Human/China/NADRV-J19/1997/GXP[X])</name>
    <name type="common">RV ADRV-N</name>
    <name type="synonym">Rotavirus (isolate novel adult diarrhea rotavirus-J19)</name>
    <dbReference type="NCBI Taxonomy" id="335103"/>
    <lineage>
        <taxon>Viruses</taxon>
        <taxon>Riboviria</taxon>
        <taxon>Orthornavirae</taxon>
        <taxon>Duplornaviricota</taxon>
        <taxon>Resentoviricetes</taxon>
        <taxon>Reovirales</taxon>
        <taxon>Sedoreoviridae</taxon>
        <taxon>Rotavirus</taxon>
        <taxon>Rotavirus H</taxon>
    </lineage>
</organism>
<feature type="chain" id="PRO_0000369837" description="Protein VP3">
    <location>
        <begin position="1"/>
        <end position="719"/>
    </location>
</feature>
<keyword id="KW-0342">GTP-binding</keyword>
<keyword id="KW-0489">Methyltransferase</keyword>
<keyword id="KW-0506">mRNA capping</keyword>
<keyword id="KW-0507">mRNA processing</keyword>
<keyword id="KW-0511">Multifunctional enzyme</keyword>
<keyword id="KW-0547">Nucleotide-binding</keyword>
<keyword id="KW-0548">Nucleotidyltransferase</keyword>
<keyword id="KW-1185">Reference proteome</keyword>
<keyword id="KW-0694">RNA-binding</keyword>
<keyword id="KW-0949">S-adenosyl-L-methionine</keyword>
<keyword id="KW-0808">Transferase</keyword>
<keyword id="KW-0946">Virion</keyword>
<reference key="1">
    <citation type="journal article" date="2008" name="J. Gen. Virol.">
        <title>Molecular characterization of a novel adult diarrhoea rotavirus strain J19 isolated in China and its significance for the evolution and origin of group B rotaviruses.</title>
        <authorList>
            <person name="Jiang S."/>
            <person name="Ji S."/>
            <person name="Tang Q."/>
            <person name="Cui X."/>
            <person name="Yang H."/>
            <person name="Kan B."/>
            <person name="Gao S."/>
        </authorList>
    </citation>
    <scope>NUCLEOTIDE SEQUENCE [GENOMIC RNA]</scope>
</reference>
<organismHost>
    <name type="scientific">Homo sapiens</name>
    <name type="common">Human</name>
    <dbReference type="NCBI Taxonomy" id="9606"/>
</organismHost>